<evidence type="ECO:0000250" key="1"/>
<evidence type="ECO:0000255" key="2"/>
<evidence type="ECO:0000256" key="3">
    <source>
        <dbReference type="SAM" id="MobiDB-lite"/>
    </source>
</evidence>
<evidence type="ECO:0000269" key="4">
    <source>
    </source>
</evidence>
<evidence type="ECO:0000269" key="5">
    <source>
    </source>
</evidence>
<evidence type="ECO:0000269" key="6">
    <source>
    </source>
</evidence>
<evidence type="ECO:0000305" key="7"/>
<evidence type="ECO:0000305" key="8">
    <source>
    </source>
</evidence>
<evidence type="ECO:0000305" key="9">
    <source>
    </source>
</evidence>
<proteinExistence type="evidence at protein level"/>
<organism>
    <name type="scientific">Saccharomyces cerevisiae (strain ATCC 204508 / S288c)</name>
    <name type="common">Baker's yeast</name>
    <dbReference type="NCBI Taxonomy" id="559292"/>
    <lineage>
        <taxon>Eukaryota</taxon>
        <taxon>Fungi</taxon>
        <taxon>Dikarya</taxon>
        <taxon>Ascomycota</taxon>
        <taxon>Saccharomycotina</taxon>
        <taxon>Saccharomycetes</taxon>
        <taxon>Saccharomycetales</taxon>
        <taxon>Saccharomycetaceae</taxon>
        <taxon>Saccharomyces</taxon>
    </lineage>
</organism>
<keyword id="KW-0903">Direct protein sequencing</keyword>
<keyword id="KW-0378">Hydrolase</keyword>
<keyword id="KW-1185">Reference proteome</keyword>
<keyword id="KW-0719">Serine esterase</keyword>
<protein>
    <recommendedName>
        <fullName>Protein phosphatase methylesterase 1</fullName>
        <shortName>PME-1</shortName>
        <ecNumber>3.1.1.89</ecNumber>
    </recommendedName>
    <alternativeName>
        <fullName>Yms2</fullName>
    </alternativeName>
</protein>
<name>PPME1_YEAST</name>
<comment type="function">
    <text evidence="4 5 6">Demethylates proteins that have been reversibly carboxymethylated. Demethylates the phosphatase PP2A catalytic subunits PPH21 and PPH22. Forms inactive complexes (PP2Ai) with phosphatase PP2A-like catalytic subunits. Involved in the regulation of cell cycle progression at START.</text>
</comment>
<comment type="catalytic activity">
    <reaction>
        <text>[phosphatase 2A protein]-C-terminal L-leucine methyl ester + H2O = [phosphatase 2A protein]-C-terminal L-leucine + methanol + H(+)</text>
        <dbReference type="Rhea" id="RHEA:48548"/>
        <dbReference type="Rhea" id="RHEA-COMP:12134"/>
        <dbReference type="Rhea" id="RHEA-COMP:12135"/>
        <dbReference type="ChEBI" id="CHEBI:15377"/>
        <dbReference type="ChEBI" id="CHEBI:15378"/>
        <dbReference type="ChEBI" id="CHEBI:17790"/>
        <dbReference type="ChEBI" id="CHEBI:90516"/>
        <dbReference type="ChEBI" id="CHEBI:90517"/>
        <dbReference type="EC" id="3.1.1.89"/>
    </reaction>
</comment>
<comment type="subunit">
    <text evidence="6">Interacts with and inactivates the phosphatase PP2A-like catalytic subunits PPG1, PPH21, PPH22, PPH3 and SIT4.</text>
</comment>
<comment type="interaction">
    <interactant intactId="EBI-13775">
        <id>P38796</id>
    </interactant>
    <interactant intactId="EBI-12745">
        <id>P23594</id>
        <label>PPH21</label>
    </interactant>
    <organismsDiffer>false</organismsDiffer>
    <experiments>5</experiments>
</comment>
<comment type="similarity">
    <text evidence="7">Belongs to the AB hydrolase superfamily.</text>
</comment>
<comment type="caution">
    <text evidence="8 9">Was originally thought to be a mitochondrial ribosomal protein (PubMed:9151978), but has not been identified in the structure of the yeast mitoribosome (PubMed:28154081).</text>
</comment>
<gene>
    <name type="primary">PPE1</name>
    <name type="ordered locus">YHR075C</name>
</gene>
<sequence>MSDDLRRKIALSQFERAKNVLDATFQEAYEDDENDGDALGSLPSFNGQSNRNRKYTGKTGSTTDRISSKEKSSLPTWSDFFDNKELVSLPDRDLDVNTYYTLPTSLLSNTTSIPIFIFHHGAGSSGLSFANLAKELNTKLEGRCGCFAFDARGHAETKFKKADAPICFDRDSFIKDFVSLLNYWFKSKISQEPLQKVSVILIGHSLGGSICTFAYPKLSTELQKKILGITMLDIVEEAAIMALNKVEHFLQNTPNVFESINDAVDWHVQHALSRLRSSAEIAIPALFAPLKSGKVVRITNLKTFSPFWDTWFTDLSHSFVGLPVSKLLILAGNENLDKELIVGQMQGKYQLVVFQDSGHFIQEDSPIKTAITLIDFWKRNDSRNVVIKTNWGQHKTVQNT</sequence>
<reference key="1">
    <citation type="journal article" date="1994" name="Science">
        <title>Complete nucleotide sequence of Saccharomyces cerevisiae chromosome VIII.</title>
        <authorList>
            <person name="Johnston M."/>
            <person name="Andrews S."/>
            <person name="Brinkman R."/>
            <person name="Cooper J."/>
            <person name="Ding H."/>
            <person name="Dover J."/>
            <person name="Du Z."/>
            <person name="Favello A."/>
            <person name="Fulton L."/>
            <person name="Gattung S."/>
            <person name="Geisel C."/>
            <person name="Kirsten J."/>
            <person name="Kucaba T."/>
            <person name="Hillier L.W."/>
            <person name="Jier M."/>
            <person name="Johnston L."/>
            <person name="Langston Y."/>
            <person name="Latreille P."/>
            <person name="Louis E.J."/>
            <person name="Macri C."/>
            <person name="Mardis E."/>
            <person name="Menezes S."/>
            <person name="Mouser L."/>
            <person name="Nhan M."/>
            <person name="Rifkin L."/>
            <person name="Riles L."/>
            <person name="St Peter H."/>
            <person name="Trevaskis E."/>
            <person name="Vaughan K."/>
            <person name="Vignati D."/>
            <person name="Wilcox L."/>
            <person name="Wohldman P."/>
            <person name="Waterston R."/>
            <person name="Wilson R."/>
            <person name="Vaudin M."/>
        </authorList>
    </citation>
    <scope>NUCLEOTIDE SEQUENCE [LARGE SCALE GENOMIC DNA]</scope>
    <source>
        <strain>ATCC 204508 / S288c</strain>
    </source>
</reference>
<reference key="2">
    <citation type="journal article" date="2014" name="G3 (Bethesda)">
        <title>The reference genome sequence of Saccharomyces cerevisiae: Then and now.</title>
        <authorList>
            <person name="Engel S.R."/>
            <person name="Dietrich F.S."/>
            <person name="Fisk D.G."/>
            <person name="Binkley G."/>
            <person name="Balakrishnan R."/>
            <person name="Costanzo M.C."/>
            <person name="Dwight S.S."/>
            <person name="Hitz B.C."/>
            <person name="Karra K."/>
            <person name="Nash R.S."/>
            <person name="Weng S."/>
            <person name="Wong E.D."/>
            <person name="Lloyd P."/>
            <person name="Skrzypek M.S."/>
            <person name="Miyasato S.R."/>
            <person name="Simison M."/>
            <person name="Cherry J.M."/>
        </authorList>
    </citation>
    <scope>GENOME REANNOTATION</scope>
    <source>
        <strain>ATCC 204508 / S288c</strain>
    </source>
</reference>
<reference key="3">
    <citation type="journal article" date="1997" name="Eur. J. Biochem.">
        <title>Identification and characterization of the genes for mitochondrial ribosomal proteins of Saccharomyces cerevisiae.</title>
        <authorList>
            <person name="Kitakawa M."/>
            <person name="Graack H.-R."/>
            <person name="Grohmann L."/>
            <person name="Goldschmidt-Reisin S."/>
            <person name="Herfurth E."/>
            <person name="Wittmann-Liebold B."/>
            <person name="Nishimura T."/>
            <person name="Isono K."/>
        </authorList>
    </citation>
    <scope>PROTEIN SEQUENCE OF 36-44</scope>
    <source>
        <strain>S288c / DC-5A</strain>
    </source>
</reference>
<reference key="4">
    <citation type="journal article" date="2000" name="EMBO J.">
        <title>Carboxyl methylation of the phosphoprotein phosphatase 2A catalytic subunit promotes its functional association with regulatory subunits in vivo.</title>
        <authorList>
            <person name="Wu J."/>
            <person name="Tolstykh T."/>
            <person name="Lee J."/>
            <person name="Boyd K."/>
            <person name="Stock J.B."/>
            <person name="Broach J.R."/>
        </authorList>
    </citation>
    <scope>FUNCTION</scope>
</reference>
<reference key="5">
    <citation type="journal article" date="2004" name="Curr. Genet.">
        <title>A new enrichment approach identifies genes that alter cell cycle progression in Saccharomyces cerevisiae.</title>
        <authorList>
            <person name="Bogomolnaya L.M."/>
            <person name="Pathak R."/>
            <person name="Cham R."/>
            <person name="Guo J."/>
            <person name="Surovtseva Y.V."/>
            <person name="Jaeckel L."/>
            <person name="Polymenis M."/>
        </authorList>
    </citation>
    <scope>FUNCTION</scope>
</reference>
<reference key="6">
    <citation type="journal article" date="2004" name="Mol. Cell. Proteomics">
        <title>Synergistic computational and experimental proteomics approaches for more accurate detection of active serine hydrolases in yeast.</title>
        <authorList>
            <person name="Baxter S.M."/>
            <person name="Rosenblum J.S."/>
            <person name="Knutson S."/>
            <person name="Nelson M.R."/>
            <person name="Montimurro J.S."/>
            <person name="Di Gennaro J.A."/>
            <person name="Speir J.A."/>
            <person name="Burbaum J.J."/>
            <person name="Fetrow J.S."/>
        </authorList>
    </citation>
    <scope>IDENTIFICATION AS A SERINE HYDROLASE</scope>
    <scope>IDENTIFICATION BY MASS SPECTROMETRY</scope>
</reference>
<reference key="7">
    <citation type="journal article" date="2005" name="Biochem. J.">
        <title>Specific interactions of PP2A and PP2A-like phosphatases with the yeast PTPA homologues, Ypa1 and Ypa2.</title>
        <authorList>
            <person name="Van Hoof C."/>
            <person name="Martens E."/>
            <person name="Longin S."/>
            <person name="Jordens J."/>
            <person name="Stevens I."/>
            <person name="Janssens V."/>
            <person name="Goris J."/>
        </authorList>
    </citation>
    <scope>FUNCTION</scope>
    <scope>INTERACTION WITH PPG1; PPH21; PPH22; PPH3 AND SIT4</scope>
</reference>
<reference key="8">
    <citation type="journal article" date="2017" name="Science">
        <title>The structure of the yeast mitochondrial ribosome.</title>
        <authorList>
            <person name="Desai N."/>
            <person name="Brown A."/>
            <person name="Amunts A."/>
            <person name="Ramakrishnan V."/>
        </authorList>
    </citation>
    <scope>SHOWS THAT PPE1 IS NOT A CONSTITUENT OF THE MITOCHONDRIAL RIBOSOMAL SMALL COMPLEX</scope>
</reference>
<accession>P38796</accession>
<accession>D3DL25</accession>
<feature type="chain" id="PRO_0000030588" description="Protein phosphatase methylesterase 1">
    <location>
        <begin position="1"/>
        <end position="400"/>
    </location>
</feature>
<feature type="domain" description="AB hydrolase-1" evidence="2">
    <location>
        <begin position="114"/>
        <end position="365"/>
    </location>
</feature>
<feature type="region of interest" description="Disordered" evidence="3">
    <location>
        <begin position="32"/>
        <end position="70"/>
    </location>
</feature>
<feature type="active site" evidence="1">
    <location>
        <position position="205"/>
    </location>
</feature>
<feature type="active site" evidence="1">
    <location>
        <position position="233"/>
    </location>
</feature>
<feature type="active site" evidence="1">
    <location>
        <position position="359"/>
    </location>
</feature>
<feature type="sequence conflict" description="In Ref. 3; AA sequence." evidence="7" ref="3">
    <original>G</original>
    <variation>D</variation>
    <location>
        <position position="36"/>
    </location>
</feature>
<feature type="sequence conflict" description="In Ref. 3; AA sequence." evidence="7" ref="3">
    <original>L</original>
    <variation>P</variation>
    <location>
        <position position="39"/>
    </location>
</feature>
<feature type="sequence conflict" description="In Ref. 3; AA sequence." evidence="7" ref="3">
    <original>S</original>
    <variation>K</variation>
    <location>
        <position position="44"/>
    </location>
</feature>
<dbReference type="EC" id="3.1.1.89"/>
<dbReference type="EMBL" id="U10556">
    <property type="protein sequence ID" value="AAB68892.1"/>
    <property type="molecule type" value="Genomic_DNA"/>
</dbReference>
<dbReference type="EMBL" id="BK006934">
    <property type="protein sequence ID" value="DAA06769.1"/>
    <property type="molecule type" value="Genomic_DNA"/>
</dbReference>
<dbReference type="PIR" id="S46814">
    <property type="entry name" value="S46814"/>
</dbReference>
<dbReference type="RefSeq" id="NP_011942.1">
    <property type="nucleotide sequence ID" value="NM_001179205.1"/>
</dbReference>
<dbReference type="SMR" id="P38796"/>
<dbReference type="BioGRID" id="36509">
    <property type="interactions" value="177"/>
</dbReference>
<dbReference type="DIP" id="DIP-1943N"/>
<dbReference type="FunCoup" id="P38796">
    <property type="interactions" value="977"/>
</dbReference>
<dbReference type="IntAct" id="P38796">
    <property type="interactions" value="4"/>
</dbReference>
<dbReference type="MINT" id="P38796"/>
<dbReference type="STRING" id="4932.YHR075C"/>
<dbReference type="ESTHER" id="yeast-ppme1">
    <property type="family name" value="PPase_methylesterase_euk"/>
</dbReference>
<dbReference type="PaxDb" id="4932-YHR075C"/>
<dbReference type="PeptideAtlas" id="P38796"/>
<dbReference type="EnsemblFungi" id="YHR075C_mRNA">
    <property type="protein sequence ID" value="YHR075C"/>
    <property type="gene ID" value="YHR075C"/>
</dbReference>
<dbReference type="GeneID" id="856474"/>
<dbReference type="KEGG" id="sce:YHR075C"/>
<dbReference type="AGR" id="SGD:S000001117"/>
<dbReference type="SGD" id="S000001117">
    <property type="gene designation" value="PPE1"/>
</dbReference>
<dbReference type="VEuPathDB" id="FungiDB:YHR075C"/>
<dbReference type="eggNOG" id="KOG2564">
    <property type="taxonomic scope" value="Eukaryota"/>
</dbReference>
<dbReference type="GeneTree" id="ENSGT00390000004396"/>
<dbReference type="HOGENOM" id="CLU_024818_3_0_1"/>
<dbReference type="InParanoid" id="P38796"/>
<dbReference type="OMA" id="VMVCHHG"/>
<dbReference type="OrthoDB" id="194865at2759"/>
<dbReference type="BioCyc" id="YEAST:YHR075C-MONOMER"/>
<dbReference type="Reactome" id="R-SCE-69273">
    <property type="pathway name" value="Cyclin A/B1/B2 associated events during G2/M transition"/>
</dbReference>
<dbReference type="BioGRID-ORCS" id="856474">
    <property type="hits" value="2 hits in 10 CRISPR screens"/>
</dbReference>
<dbReference type="PRO" id="PR:P38796"/>
<dbReference type="Proteomes" id="UP000002311">
    <property type="component" value="Chromosome VIII"/>
</dbReference>
<dbReference type="RNAct" id="P38796">
    <property type="molecule type" value="protein"/>
</dbReference>
<dbReference type="GO" id="GO:0005763">
    <property type="term" value="C:mitochondrial small ribosomal subunit"/>
    <property type="evidence" value="ECO:0000314"/>
    <property type="project" value="SGD"/>
</dbReference>
<dbReference type="GO" id="GO:0051722">
    <property type="term" value="F:protein C-terminal methylesterase activity"/>
    <property type="evidence" value="ECO:0000315"/>
    <property type="project" value="SGD"/>
</dbReference>
<dbReference type="FunFam" id="3.40.50.1820:FF:000372">
    <property type="entry name" value="Protein phosphatase methylesterase 1"/>
    <property type="match status" value="1"/>
</dbReference>
<dbReference type="Gene3D" id="3.40.50.1820">
    <property type="entry name" value="alpha/beta hydrolase"/>
    <property type="match status" value="1"/>
</dbReference>
<dbReference type="InterPro" id="IPR000073">
    <property type="entry name" value="AB_hydrolase_1"/>
</dbReference>
<dbReference type="InterPro" id="IPR029058">
    <property type="entry name" value="AB_hydrolase_fold"/>
</dbReference>
<dbReference type="InterPro" id="IPR016812">
    <property type="entry name" value="PPase_methylesterase_euk"/>
</dbReference>
<dbReference type="PANTHER" id="PTHR14189:SF0">
    <property type="entry name" value="PROTEIN PHOSPHATASE METHYLESTERASE 1"/>
    <property type="match status" value="1"/>
</dbReference>
<dbReference type="PANTHER" id="PTHR14189">
    <property type="entry name" value="PROTEIN PHOSPHATASE METHYLESTERASE-1 RELATED"/>
    <property type="match status" value="1"/>
</dbReference>
<dbReference type="Pfam" id="PF00561">
    <property type="entry name" value="Abhydrolase_1"/>
    <property type="match status" value="1"/>
</dbReference>
<dbReference type="PIRSF" id="PIRSF022950">
    <property type="entry name" value="PPase_methylesterase_euk"/>
    <property type="match status" value="1"/>
</dbReference>
<dbReference type="SUPFAM" id="SSF53474">
    <property type="entry name" value="alpha/beta-Hydrolases"/>
    <property type="match status" value="1"/>
</dbReference>